<dbReference type="EC" id="5.3.1.28" evidence="1"/>
<dbReference type="EMBL" id="AE000511">
    <property type="protein sequence ID" value="AAD07903.1"/>
    <property type="molecule type" value="Genomic_DNA"/>
</dbReference>
<dbReference type="PIR" id="A64627">
    <property type="entry name" value="A64627"/>
</dbReference>
<dbReference type="RefSeq" id="NP_207651.1">
    <property type="nucleotide sequence ID" value="NC_000915.1"/>
</dbReference>
<dbReference type="RefSeq" id="WP_000566736.1">
    <property type="nucleotide sequence ID" value="NC_018939.1"/>
</dbReference>
<dbReference type="SMR" id="O25528"/>
<dbReference type="DIP" id="DIP-3683N"/>
<dbReference type="FunCoup" id="O25528">
    <property type="interactions" value="118"/>
</dbReference>
<dbReference type="IntAct" id="O25528">
    <property type="interactions" value="1"/>
</dbReference>
<dbReference type="MINT" id="O25528"/>
<dbReference type="STRING" id="85962.HP_0857"/>
<dbReference type="PaxDb" id="85962-C694_04390"/>
<dbReference type="EnsemblBacteria" id="AAD07903">
    <property type="protein sequence ID" value="AAD07903"/>
    <property type="gene ID" value="HP_0857"/>
</dbReference>
<dbReference type="KEGG" id="heo:C694_04390"/>
<dbReference type="KEGG" id="hpy:HP_0857"/>
<dbReference type="PATRIC" id="fig|85962.47.peg.911"/>
<dbReference type="eggNOG" id="COG0279">
    <property type="taxonomic scope" value="Bacteria"/>
</dbReference>
<dbReference type="InParanoid" id="O25528"/>
<dbReference type="OrthoDB" id="9810929at2"/>
<dbReference type="PhylomeDB" id="O25528"/>
<dbReference type="BRENDA" id="5.3.1.28">
    <property type="organism ID" value="2604"/>
</dbReference>
<dbReference type="SABIO-RK" id="O25528"/>
<dbReference type="UniPathway" id="UPA00041">
    <property type="reaction ID" value="UER00436"/>
</dbReference>
<dbReference type="UniPathway" id="UPA00958"/>
<dbReference type="Proteomes" id="UP000000429">
    <property type="component" value="Chromosome"/>
</dbReference>
<dbReference type="GO" id="GO:0005737">
    <property type="term" value="C:cytoplasm"/>
    <property type="evidence" value="ECO:0007669"/>
    <property type="project" value="UniProtKB-SubCell"/>
</dbReference>
<dbReference type="GO" id="GO:1990102">
    <property type="term" value="C:DnaA-DiaA complex"/>
    <property type="evidence" value="ECO:0000318"/>
    <property type="project" value="GO_Central"/>
</dbReference>
<dbReference type="GO" id="GO:0097367">
    <property type="term" value="F:carbohydrate derivative binding"/>
    <property type="evidence" value="ECO:0007669"/>
    <property type="project" value="InterPro"/>
</dbReference>
<dbReference type="GO" id="GO:0008968">
    <property type="term" value="F:D-sedoheptulose 7-phosphate isomerase activity"/>
    <property type="evidence" value="ECO:0007669"/>
    <property type="project" value="UniProtKB-UniRule"/>
</dbReference>
<dbReference type="GO" id="GO:0008270">
    <property type="term" value="F:zinc ion binding"/>
    <property type="evidence" value="ECO:0007669"/>
    <property type="project" value="UniProtKB-UniRule"/>
</dbReference>
<dbReference type="GO" id="GO:2001061">
    <property type="term" value="P:D-glycero-D-manno-heptose 7-phosphate biosynthetic process"/>
    <property type="evidence" value="ECO:0007669"/>
    <property type="project" value="UniProtKB-UniPathway"/>
</dbReference>
<dbReference type="GO" id="GO:0009244">
    <property type="term" value="P:lipopolysaccharide core region biosynthetic process"/>
    <property type="evidence" value="ECO:0007669"/>
    <property type="project" value="UniProtKB-UniPathway"/>
</dbReference>
<dbReference type="GO" id="GO:0032298">
    <property type="term" value="P:positive regulation of DNA-templated DNA replication initiation"/>
    <property type="evidence" value="ECO:0000318"/>
    <property type="project" value="GO_Central"/>
</dbReference>
<dbReference type="CDD" id="cd05006">
    <property type="entry name" value="SIS_GmhA"/>
    <property type="match status" value="1"/>
</dbReference>
<dbReference type="Gene3D" id="3.40.50.10490">
    <property type="entry name" value="Glucose-6-phosphate isomerase like protein, domain 1"/>
    <property type="match status" value="1"/>
</dbReference>
<dbReference type="HAMAP" id="MF_00067">
    <property type="entry name" value="GmhA"/>
    <property type="match status" value="1"/>
</dbReference>
<dbReference type="InterPro" id="IPR035461">
    <property type="entry name" value="GmhA/DiaA"/>
</dbReference>
<dbReference type="InterPro" id="IPR004515">
    <property type="entry name" value="Phosphoheptose_Isoase"/>
</dbReference>
<dbReference type="InterPro" id="IPR001347">
    <property type="entry name" value="SIS_dom"/>
</dbReference>
<dbReference type="InterPro" id="IPR046348">
    <property type="entry name" value="SIS_dom_sf"/>
</dbReference>
<dbReference type="InterPro" id="IPR050099">
    <property type="entry name" value="SIS_GmhA/DiaA_subfam"/>
</dbReference>
<dbReference type="NCBIfam" id="TIGR00441">
    <property type="entry name" value="gmhA"/>
    <property type="match status" value="1"/>
</dbReference>
<dbReference type="PANTHER" id="PTHR30390:SF6">
    <property type="entry name" value="DNAA INITIATOR-ASSOCIATING PROTEIN DIAA"/>
    <property type="match status" value="1"/>
</dbReference>
<dbReference type="PANTHER" id="PTHR30390">
    <property type="entry name" value="SEDOHEPTULOSE 7-PHOSPHATE ISOMERASE / DNAA INITIATOR-ASSOCIATING FACTOR FOR REPLICATION INITIATION"/>
    <property type="match status" value="1"/>
</dbReference>
<dbReference type="Pfam" id="PF13580">
    <property type="entry name" value="SIS_2"/>
    <property type="match status" value="1"/>
</dbReference>
<dbReference type="SUPFAM" id="SSF53697">
    <property type="entry name" value="SIS domain"/>
    <property type="match status" value="1"/>
</dbReference>
<dbReference type="PROSITE" id="PS51464">
    <property type="entry name" value="SIS"/>
    <property type="match status" value="1"/>
</dbReference>
<evidence type="ECO:0000255" key="1">
    <source>
        <dbReference type="HAMAP-Rule" id="MF_00067"/>
    </source>
</evidence>
<proteinExistence type="inferred from homology"/>
<name>GMHA_HELPY</name>
<feature type="chain" id="PRO_0000136532" description="Phosphoheptose isomerase">
    <location>
        <begin position="1"/>
        <end position="192"/>
    </location>
</feature>
<feature type="domain" description="SIS" evidence="1">
    <location>
        <begin position="35"/>
        <end position="192"/>
    </location>
</feature>
<feature type="binding site" evidence="1">
    <location>
        <begin position="50"/>
        <end position="52"/>
    </location>
    <ligand>
        <name>substrate</name>
    </ligand>
</feature>
<feature type="binding site" evidence="1">
    <location>
        <position position="59"/>
    </location>
    <ligand>
        <name>Zn(2+)</name>
        <dbReference type="ChEBI" id="CHEBI:29105"/>
    </ligand>
</feature>
<feature type="binding site" evidence="1">
    <location>
        <position position="63"/>
    </location>
    <ligand>
        <name>substrate</name>
    </ligand>
</feature>
<feature type="binding site" evidence="1">
    <location>
        <position position="63"/>
    </location>
    <ligand>
        <name>Zn(2+)</name>
        <dbReference type="ChEBI" id="CHEBI:29105"/>
    </ligand>
</feature>
<feature type="binding site" evidence="1">
    <location>
        <begin position="92"/>
        <end position="93"/>
    </location>
    <ligand>
        <name>substrate</name>
    </ligand>
</feature>
<feature type="binding site" evidence="1">
    <location>
        <begin position="118"/>
        <end position="120"/>
    </location>
    <ligand>
        <name>substrate</name>
    </ligand>
</feature>
<feature type="binding site" evidence="1">
    <location>
        <position position="123"/>
    </location>
    <ligand>
        <name>substrate</name>
    </ligand>
</feature>
<feature type="binding site" evidence="1">
    <location>
        <position position="170"/>
    </location>
    <ligand>
        <name>substrate</name>
    </ligand>
</feature>
<feature type="binding site" evidence="1">
    <location>
        <position position="170"/>
    </location>
    <ligand>
        <name>Zn(2+)</name>
        <dbReference type="ChEBI" id="CHEBI:29105"/>
    </ligand>
</feature>
<feature type="binding site" evidence="1">
    <location>
        <position position="178"/>
    </location>
    <ligand>
        <name>Zn(2+)</name>
        <dbReference type="ChEBI" id="CHEBI:29105"/>
    </ligand>
</feature>
<protein>
    <recommendedName>
        <fullName evidence="1">Phosphoheptose isomerase</fullName>
        <ecNumber evidence="1">5.3.1.28</ecNumber>
    </recommendedName>
    <alternativeName>
        <fullName evidence="1">Sedoheptulose 7-phosphate isomerase</fullName>
    </alternativeName>
</protein>
<keyword id="KW-0119">Carbohydrate metabolism</keyword>
<keyword id="KW-0963">Cytoplasm</keyword>
<keyword id="KW-0413">Isomerase</keyword>
<keyword id="KW-0448">Lipopolysaccharide biosynthesis</keyword>
<keyword id="KW-0479">Metal-binding</keyword>
<keyword id="KW-1185">Reference proteome</keyword>
<keyword id="KW-0862">Zinc</keyword>
<comment type="function">
    <text evidence="1">Catalyzes the isomerization of sedoheptulose 7-phosphate in D-glycero-D-manno-heptose 7-phosphate.</text>
</comment>
<comment type="catalytic activity">
    <reaction evidence="1">
        <text>2 D-sedoheptulose 7-phosphate = D-glycero-alpha-D-manno-heptose 7-phosphate + D-glycero-beta-D-manno-heptose 7-phosphate</text>
        <dbReference type="Rhea" id="RHEA:27489"/>
        <dbReference type="ChEBI" id="CHEBI:57483"/>
        <dbReference type="ChEBI" id="CHEBI:60203"/>
        <dbReference type="ChEBI" id="CHEBI:60204"/>
        <dbReference type="EC" id="5.3.1.28"/>
    </reaction>
</comment>
<comment type="cofactor">
    <cofactor evidence="1">
        <name>Zn(2+)</name>
        <dbReference type="ChEBI" id="CHEBI:29105"/>
    </cofactor>
    <text evidence="1">Binds 1 zinc ion per subunit.</text>
</comment>
<comment type="pathway">
    <text evidence="1">Carbohydrate biosynthesis; D-glycero-D-manno-heptose 7-phosphate biosynthesis; D-glycero-alpha-D-manno-heptose 7-phosphate and D-glycero-beta-D-manno-heptose 7-phosphate from sedoheptulose 7-phosphate: step 1/1.</text>
</comment>
<comment type="pathway">
    <text>Bacterial outer membrane biogenesis; LPS core biosynthesis.</text>
</comment>
<comment type="subunit">
    <text evidence="1">Homotetramer.</text>
</comment>
<comment type="subcellular location">
    <subcellularLocation>
        <location evidence="1">Cytoplasm</location>
    </subcellularLocation>
</comment>
<comment type="miscellaneous">
    <text evidence="1">The reaction produces a racemic mixture of D-glycero-alpha-D-manno-heptose 7-phosphate and D-glycero-beta-D-manno-heptose 7-phosphate.</text>
</comment>
<comment type="similarity">
    <text evidence="1">Belongs to the SIS family. GmhA subfamily.</text>
</comment>
<organism>
    <name type="scientific">Helicobacter pylori (strain ATCC 700392 / 26695)</name>
    <name type="common">Campylobacter pylori</name>
    <dbReference type="NCBI Taxonomy" id="85962"/>
    <lineage>
        <taxon>Bacteria</taxon>
        <taxon>Pseudomonadati</taxon>
        <taxon>Campylobacterota</taxon>
        <taxon>Epsilonproteobacteria</taxon>
        <taxon>Campylobacterales</taxon>
        <taxon>Helicobacteraceae</taxon>
        <taxon>Helicobacter</taxon>
    </lineage>
</organism>
<accession>O25528</accession>
<sequence length="192" mass="21102">MIDNLIKKEFLAHKEALEKSLEGLQEALKQSVHLLIETLENQGKILICGNGGSASDAQHFAAELTGRYKLERKGLSAISLNTDISALTAIANDYGYEEVFARQVEALGVKNDVLIGISTSGNSKNVLKAYEKAKDLEMKTLSLAGRDGGKMKPLSDMALIVPSDDTPRIQEMHILMIHILCDCIERHFAHKN</sequence>
<reference key="1">
    <citation type="journal article" date="1997" name="Nature">
        <title>The complete genome sequence of the gastric pathogen Helicobacter pylori.</title>
        <authorList>
            <person name="Tomb J.-F."/>
            <person name="White O."/>
            <person name="Kerlavage A.R."/>
            <person name="Clayton R.A."/>
            <person name="Sutton G.G."/>
            <person name="Fleischmann R.D."/>
            <person name="Ketchum K.A."/>
            <person name="Klenk H.-P."/>
            <person name="Gill S.R."/>
            <person name="Dougherty B.A."/>
            <person name="Nelson K.E."/>
            <person name="Quackenbush J."/>
            <person name="Zhou L."/>
            <person name="Kirkness E.F."/>
            <person name="Peterson S.N."/>
            <person name="Loftus B.J."/>
            <person name="Richardson D.L."/>
            <person name="Dodson R.J."/>
            <person name="Khalak H.G."/>
            <person name="Glodek A."/>
            <person name="McKenney K."/>
            <person name="FitzGerald L.M."/>
            <person name="Lee N."/>
            <person name="Adams M.D."/>
            <person name="Hickey E.K."/>
            <person name="Berg D.E."/>
            <person name="Gocayne J.D."/>
            <person name="Utterback T.R."/>
            <person name="Peterson J.D."/>
            <person name="Kelley J.M."/>
            <person name="Cotton M.D."/>
            <person name="Weidman J.F."/>
            <person name="Fujii C."/>
            <person name="Bowman C."/>
            <person name="Watthey L."/>
            <person name="Wallin E."/>
            <person name="Hayes W.S."/>
            <person name="Borodovsky M."/>
            <person name="Karp P.D."/>
            <person name="Smith H.O."/>
            <person name="Fraser C.M."/>
            <person name="Venter J.C."/>
        </authorList>
    </citation>
    <scope>NUCLEOTIDE SEQUENCE [LARGE SCALE GENOMIC DNA]</scope>
    <source>
        <strain>ATCC 700392 / 26695</strain>
    </source>
</reference>
<reference key="2">
    <citation type="journal article" date="2002" name="Microbiology">
        <title>Novel pathways for biosynthesis of nucleotide-activated glycero-manno-heptose precursors of bacterial glycoproteins and cell surface polysaccharides.</title>
        <authorList>
            <person name="Valvano M.A."/>
            <person name="Messner P."/>
            <person name="Kosma P."/>
        </authorList>
    </citation>
    <scope>BIOSYNTHESIS OF NUCLEOTIDE-ACTIVATED GLYCERO-MANNO-HEPTOSE</scope>
</reference>
<gene>
    <name evidence="1" type="primary">gmhA</name>
    <name type="ordered locus">HP_0857</name>
</gene>